<accession>B4RDU4</accession>
<organism>
    <name type="scientific">Phenylobacterium zucineum (strain HLK1)</name>
    <dbReference type="NCBI Taxonomy" id="450851"/>
    <lineage>
        <taxon>Bacteria</taxon>
        <taxon>Pseudomonadati</taxon>
        <taxon>Pseudomonadota</taxon>
        <taxon>Alphaproteobacteria</taxon>
        <taxon>Caulobacterales</taxon>
        <taxon>Caulobacteraceae</taxon>
        <taxon>Phenylobacterium</taxon>
    </lineage>
</organism>
<feature type="chain" id="PRO_0000375643" description="Succinyl-diaminopimelate desuccinylase">
    <location>
        <begin position="1"/>
        <end position="380"/>
    </location>
</feature>
<feature type="active site" evidence="1">
    <location>
        <position position="71"/>
    </location>
</feature>
<feature type="active site" description="Proton acceptor" evidence="1">
    <location>
        <position position="135"/>
    </location>
</feature>
<feature type="binding site" evidence="1">
    <location>
        <position position="69"/>
    </location>
    <ligand>
        <name>Zn(2+)</name>
        <dbReference type="ChEBI" id="CHEBI:29105"/>
        <label>1</label>
    </ligand>
</feature>
<feature type="binding site" evidence="1">
    <location>
        <position position="102"/>
    </location>
    <ligand>
        <name>Zn(2+)</name>
        <dbReference type="ChEBI" id="CHEBI:29105"/>
        <label>1</label>
    </ligand>
</feature>
<feature type="binding site" evidence="1">
    <location>
        <position position="102"/>
    </location>
    <ligand>
        <name>Zn(2+)</name>
        <dbReference type="ChEBI" id="CHEBI:29105"/>
        <label>2</label>
    </ligand>
</feature>
<feature type="binding site" evidence="1">
    <location>
        <position position="136"/>
    </location>
    <ligand>
        <name>Zn(2+)</name>
        <dbReference type="ChEBI" id="CHEBI:29105"/>
        <label>2</label>
    </ligand>
</feature>
<feature type="binding site" evidence="1">
    <location>
        <position position="164"/>
    </location>
    <ligand>
        <name>Zn(2+)</name>
        <dbReference type="ChEBI" id="CHEBI:29105"/>
        <label>1</label>
    </ligand>
</feature>
<feature type="binding site" evidence="1">
    <location>
        <position position="353"/>
    </location>
    <ligand>
        <name>Zn(2+)</name>
        <dbReference type="ChEBI" id="CHEBI:29105"/>
        <label>2</label>
    </ligand>
</feature>
<dbReference type="EC" id="3.5.1.18" evidence="1"/>
<dbReference type="EMBL" id="CP000747">
    <property type="protein sequence ID" value="ACG76793.1"/>
    <property type="molecule type" value="Genomic_DNA"/>
</dbReference>
<dbReference type="RefSeq" id="WP_012520941.1">
    <property type="nucleotide sequence ID" value="NC_011144.1"/>
</dbReference>
<dbReference type="SMR" id="B4RDU4"/>
<dbReference type="STRING" id="450851.PHZ_c0379"/>
<dbReference type="KEGG" id="pzu:PHZ_c0379"/>
<dbReference type="eggNOG" id="COG0624">
    <property type="taxonomic scope" value="Bacteria"/>
</dbReference>
<dbReference type="HOGENOM" id="CLU_021802_4_0_5"/>
<dbReference type="OrthoDB" id="9809784at2"/>
<dbReference type="UniPathway" id="UPA00034">
    <property type="reaction ID" value="UER00021"/>
</dbReference>
<dbReference type="Proteomes" id="UP000001868">
    <property type="component" value="Chromosome"/>
</dbReference>
<dbReference type="GO" id="GO:0008777">
    <property type="term" value="F:acetylornithine deacetylase activity"/>
    <property type="evidence" value="ECO:0007669"/>
    <property type="project" value="TreeGrafter"/>
</dbReference>
<dbReference type="GO" id="GO:0050897">
    <property type="term" value="F:cobalt ion binding"/>
    <property type="evidence" value="ECO:0007669"/>
    <property type="project" value="UniProtKB-UniRule"/>
</dbReference>
<dbReference type="GO" id="GO:0009014">
    <property type="term" value="F:succinyl-diaminopimelate desuccinylase activity"/>
    <property type="evidence" value="ECO:0007669"/>
    <property type="project" value="UniProtKB-UniRule"/>
</dbReference>
<dbReference type="GO" id="GO:0008270">
    <property type="term" value="F:zinc ion binding"/>
    <property type="evidence" value="ECO:0007669"/>
    <property type="project" value="UniProtKB-UniRule"/>
</dbReference>
<dbReference type="GO" id="GO:0019877">
    <property type="term" value="P:diaminopimelate biosynthetic process"/>
    <property type="evidence" value="ECO:0007669"/>
    <property type="project" value="UniProtKB-UniRule"/>
</dbReference>
<dbReference type="GO" id="GO:0006526">
    <property type="term" value="P:L-arginine biosynthetic process"/>
    <property type="evidence" value="ECO:0007669"/>
    <property type="project" value="TreeGrafter"/>
</dbReference>
<dbReference type="GO" id="GO:0009089">
    <property type="term" value="P:lysine biosynthetic process via diaminopimelate"/>
    <property type="evidence" value="ECO:0007669"/>
    <property type="project" value="UniProtKB-UniRule"/>
</dbReference>
<dbReference type="CDD" id="cd03891">
    <property type="entry name" value="M20_DapE_proteobac"/>
    <property type="match status" value="1"/>
</dbReference>
<dbReference type="Gene3D" id="3.40.630.10">
    <property type="entry name" value="Zn peptidases"/>
    <property type="match status" value="2"/>
</dbReference>
<dbReference type="HAMAP" id="MF_01690">
    <property type="entry name" value="DapE"/>
    <property type="match status" value="1"/>
</dbReference>
<dbReference type="InterPro" id="IPR001261">
    <property type="entry name" value="ArgE/DapE_CS"/>
</dbReference>
<dbReference type="InterPro" id="IPR036264">
    <property type="entry name" value="Bact_exopeptidase_dim_dom"/>
</dbReference>
<dbReference type="InterPro" id="IPR005941">
    <property type="entry name" value="DapE_proteobac"/>
</dbReference>
<dbReference type="InterPro" id="IPR002933">
    <property type="entry name" value="Peptidase_M20"/>
</dbReference>
<dbReference type="InterPro" id="IPR011650">
    <property type="entry name" value="Peptidase_M20_dimer"/>
</dbReference>
<dbReference type="InterPro" id="IPR050072">
    <property type="entry name" value="Peptidase_M20A"/>
</dbReference>
<dbReference type="NCBIfam" id="TIGR01246">
    <property type="entry name" value="dapE_proteo"/>
    <property type="match status" value="1"/>
</dbReference>
<dbReference type="NCBIfam" id="NF009557">
    <property type="entry name" value="PRK13009.1"/>
    <property type="match status" value="1"/>
</dbReference>
<dbReference type="PANTHER" id="PTHR43808">
    <property type="entry name" value="ACETYLORNITHINE DEACETYLASE"/>
    <property type="match status" value="1"/>
</dbReference>
<dbReference type="PANTHER" id="PTHR43808:SF31">
    <property type="entry name" value="N-ACETYL-L-CITRULLINE DEACETYLASE"/>
    <property type="match status" value="1"/>
</dbReference>
<dbReference type="Pfam" id="PF07687">
    <property type="entry name" value="M20_dimer"/>
    <property type="match status" value="1"/>
</dbReference>
<dbReference type="Pfam" id="PF01546">
    <property type="entry name" value="Peptidase_M20"/>
    <property type="match status" value="1"/>
</dbReference>
<dbReference type="SUPFAM" id="SSF55031">
    <property type="entry name" value="Bacterial exopeptidase dimerisation domain"/>
    <property type="match status" value="1"/>
</dbReference>
<dbReference type="SUPFAM" id="SSF53187">
    <property type="entry name" value="Zn-dependent exopeptidases"/>
    <property type="match status" value="1"/>
</dbReference>
<dbReference type="PROSITE" id="PS00759">
    <property type="entry name" value="ARGE_DAPE_CPG2_2"/>
    <property type="match status" value="1"/>
</dbReference>
<name>DAPE_PHEZH</name>
<protein>
    <recommendedName>
        <fullName evidence="1">Succinyl-diaminopimelate desuccinylase</fullName>
        <shortName evidence="1">SDAP desuccinylase</shortName>
        <ecNumber evidence="1">3.5.1.18</ecNumber>
    </recommendedName>
    <alternativeName>
        <fullName evidence="1">N-succinyl-LL-2,6-diaminoheptanedioate amidohydrolase</fullName>
    </alternativeName>
</protein>
<proteinExistence type="inferred from homology"/>
<comment type="function">
    <text evidence="1">Catalyzes the hydrolysis of N-succinyl-L,L-diaminopimelic acid (SDAP), forming succinate and LL-2,6-diaminopimelate (DAP), an intermediate involved in the bacterial biosynthesis of lysine and meso-diaminopimelic acid, an essential component of bacterial cell walls.</text>
</comment>
<comment type="catalytic activity">
    <reaction evidence="1">
        <text>N-succinyl-(2S,6S)-2,6-diaminopimelate + H2O = (2S,6S)-2,6-diaminopimelate + succinate</text>
        <dbReference type="Rhea" id="RHEA:22608"/>
        <dbReference type="ChEBI" id="CHEBI:15377"/>
        <dbReference type="ChEBI" id="CHEBI:30031"/>
        <dbReference type="ChEBI" id="CHEBI:57609"/>
        <dbReference type="ChEBI" id="CHEBI:58087"/>
        <dbReference type="EC" id="3.5.1.18"/>
    </reaction>
</comment>
<comment type="cofactor">
    <cofactor evidence="1">
        <name>Zn(2+)</name>
        <dbReference type="ChEBI" id="CHEBI:29105"/>
    </cofactor>
    <cofactor evidence="1">
        <name>Co(2+)</name>
        <dbReference type="ChEBI" id="CHEBI:48828"/>
    </cofactor>
    <text evidence="1">Binds 2 Zn(2+) or Co(2+) ions per subunit.</text>
</comment>
<comment type="pathway">
    <text evidence="1">Amino-acid biosynthesis; L-lysine biosynthesis via DAP pathway; LL-2,6-diaminopimelate from (S)-tetrahydrodipicolinate (succinylase route): step 3/3.</text>
</comment>
<comment type="subunit">
    <text evidence="1">Homodimer.</text>
</comment>
<comment type="similarity">
    <text evidence="1">Belongs to the peptidase M20A family. DapE subfamily.</text>
</comment>
<sequence length="380" mass="40015">MSAAIDAVELSRELIRKPSVTPADEGAMDVVERTLAGLGFACRRMRFGEIENLYARYGTARPNLCFAGHTDVVPVGDAAAWSKDAFAADVVDGVLIGRGAVDMKSAIAAFAAAAAEAIAAGRVTGSVSFLITGDEEGVATHGTKKVVEALLAEGEAIDHCVVGEPTSAESFGDMVKVGRRGSINAEILVEGIQGHVAYPHRAANPVPVLVRLLAALQDRALDEGYPEFQPSNLEVTMIDVPNTATNVIPGTAKARLNIRFNPNHTGQALADWIAAEARKAADGFKGKVTVTPQISGEAFLTERGPFTELVAAAVKDVTGAEPELSTSGGTSDARFIRALCPVVEVGLVGRTMHQVDERAPVDEIRRLQAVYAAIIARYFA</sequence>
<gene>
    <name evidence="1" type="primary">dapE</name>
    <name type="ordered locus">PHZ_c0379</name>
</gene>
<keyword id="KW-0028">Amino-acid biosynthesis</keyword>
<keyword id="KW-0170">Cobalt</keyword>
<keyword id="KW-0220">Diaminopimelate biosynthesis</keyword>
<keyword id="KW-0378">Hydrolase</keyword>
<keyword id="KW-0457">Lysine biosynthesis</keyword>
<keyword id="KW-0479">Metal-binding</keyword>
<keyword id="KW-1185">Reference proteome</keyword>
<keyword id="KW-0862">Zinc</keyword>
<evidence type="ECO:0000255" key="1">
    <source>
        <dbReference type="HAMAP-Rule" id="MF_01690"/>
    </source>
</evidence>
<reference key="1">
    <citation type="journal article" date="2008" name="BMC Genomics">
        <title>Complete genome of Phenylobacterium zucineum - a novel facultative intracellular bacterium isolated from human erythroleukemia cell line K562.</title>
        <authorList>
            <person name="Luo Y."/>
            <person name="Xu X."/>
            <person name="Ding Z."/>
            <person name="Liu Z."/>
            <person name="Zhang B."/>
            <person name="Yan Z."/>
            <person name="Sun J."/>
            <person name="Hu S."/>
            <person name="Hu X."/>
        </authorList>
    </citation>
    <scope>NUCLEOTIDE SEQUENCE [LARGE SCALE GENOMIC DNA]</scope>
    <source>
        <strain>HLK1</strain>
    </source>
</reference>